<organism>
    <name type="scientific">Bacillus cereus (strain G9842)</name>
    <dbReference type="NCBI Taxonomy" id="405531"/>
    <lineage>
        <taxon>Bacteria</taxon>
        <taxon>Bacillati</taxon>
        <taxon>Bacillota</taxon>
        <taxon>Bacilli</taxon>
        <taxon>Bacillales</taxon>
        <taxon>Bacillaceae</taxon>
        <taxon>Bacillus</taxon>
        <taxon>Bacillus cereus group</taxon>
    </lineage>
</organism>
<dbReference type="EMBL" id="CP001186">
    <property type="protein sequence ID" value="ACK96416.1"/>
    <property type="molecule type" value="Genomic_DNA"/>
</dbReference>
<dbReference type="RefSeq" id="WP_000160209.1">
    <property type="nucleotide sequence ID" value="NC_011772.1"/>
</dbReference>
<dbReference type="SMR" id="B7IT19"/>
<dbReference type="GeneID" id="92887803"/>
<dbReference type="KEGG" id="bcg:BCG9842_B5195"/>
<dbReference type="HOGENOM" id="CLU_044142_4_1_9"/>
<dbReference type="Proteomes" id="UP000006744">
    <property type="component" value="Chromosome"/>
</dbReference>
<dbReference type="GO" id="GO:0022625">
    <property type="term" value="C:cytosolic large ribosomal subunit"/>
    <property type="evidence" value="ECO:0007669"/>
    <property type="project" value="TreeGrafter"/>
</dbReference>
<dbReference type="GO" id="GO:0019843">
    <property type="term" value="F:rRNA binding"/>
    <property type="evidence" value="ECO:0007669"/>
    <property type="project" value="UniProtKB-UniRule"/>
</dbReference>
<dbReference type="GO" id="GO:0003735">
    <property type="term" value="F:structural constituent of ribosome"/>
    <property type="evidence" value="ECO:0007669"/>
    <property type="project" value="InterPro"/>
</dbReference>
<dbReference type="GO" id="GO:0006412">
    <property type="term" value="P:translation"/>
    <property type="evidence" value="ECO:0007669"/>
    <property type="project" value="UniProtKB-UniRule"/>
</dbReference>
<dbReference type="FunFam" id="2.40.30.10:FF:000004">
    <property type="entry name" value="50S ribosomal protein L3"/>
    <property type="match status" value="1"/>
</dbReference>
<dbReference type="FunFam" id="3.30.160.810:FF:000002">
    <property type="entry name" value="50S ribosomal protein L3"/>
    <property type="match status" value="1"/>
</dbReference>
<dbReference type="Gene3D" id="3.30.160.810">
    <property type="match status" value="1"/>
</dbReference>
<dbReference type="Gene3D" id="2.40.30.10">
    <property type="entry name" value="Translation factors"/>
    <property type="match status" value="1"/>
</dbReference>
<dbReference type="HAMAP" id="MF_01325_B">
    <property type="entry name" value="Ribosomal_uL3_B"/>
    <property type="match status" value="1"/>
</dbReference>
<dbReference type="InterPro" id="IPR000597">
    <property type="entry name" value="Ribosomal_uL3"/>
</dbReference>
<dbReference type="InterPro" id="IPR019927">
    <property type="entry name" value="Ribosomal_uL3_bac/org-type"/>
</dbReference>
<dbReference type="InterPro" id="IPR019926">
    <property type="entry name" value="Ribosomal_uL3_CS"/>
</dbReference>
<dbReference type="InterPro" id="IPR009000">
    <property type="entry name" value="Transl_B-barrel_sf"/>
</dbReference>
<dbReference type="NCBIfam" id="TIGR03625">
    <property type="entry name" value="L3_bact"/>
    <property type="match status" value="1"/>
</dbReference>
<dbReference type="PANTHER" id="PTHR11229">
    <property type="entry name" value="50S RIBOSOMAL PROTEIN L3"/>
    <property type="match status" value="1"/>
</dbReference>
<dbReference type="PANTHER" id="PTHR11229:SF16">
    <property type="entry name" value="LARGE RIBOSOMAL SUBUNIT PROTEIN UL3C"/>
    <property type="match status" value="1"/>
</dbReference>
<dbReference type="Pfam" id="PF00297">
    <property type="entry name" value="Ribosomal_L3"/>
    <property type="match status" value="1"/>
</dbReference>
<dbReference type="SUPFAM" id="SSF50447">
    <property type="entry name" value="Translation proteins"/>
    <property type="match status" value="1"/>
</dbReference>
<dbReference type="PROSITE" id="PS00474">
    <property type="entry name" value="RIBOSOMAL_L3"/>
    <property type="match status" value="1"/>
</dbReference>
<sequence length="210" mass="22676">MTKGILGRKIGMTQVFAENGELIPVTVIAANPNVVLQKKTTETDGYNAIQLGFEDKREKLTNKPEQGHTAKASTTPKRFIREIRDADVDGLEVGQEVKVEVFAAGEIVDVTGISKGKGFQGVIKRHGQSRGPMSHGSRYHRRPGSMGPVAPNRVFKGKKLAGRMGGDQVTIQNLEIVQVDTERNLLLVKGNVPGAKKSLVVVQGAVKVSK</sequence>
<keyword id="KW-0687">Ribonucleoprotein</keyword>
<keyword id="KW-0689">Ribosomal protein</keyword>
<keyword id="KW-0694">RNA-binding</keyword>
<keyword id="KW-0699">rRNA-binding</keyword>
<reference key="1">
    <citation type="submission" date="2008-10" db="EMBL/GenBank/DDBJ databases">
        <title>Genome sequence of Bacillus cereus G9842.</title>
        <authorList>
            <person name="Dodson R.J."/>
            <person name="Durkin A.S."/>
            <person name="Rosovitz M.J."/>
            <person name="Rasko D.A."/>
            <person name="Hoffmaster A."/>
            <person name="Ravel J."/>
            <person name="Sutton G."/>
        </authorList>
    </citation>
    <scope>NUCLEOTIDE SEQUENCE [LARGE SCALE GENOMIC DNA]</scope>
    <source>
        <strain>G9842</strain>
    </source>
</reference>
<gene>
    <name evidence="1" type="primary">rplC</name>
    <name type="ordered locus">BCG9842_B5195</name>
</gene>
<protein>
    <recommendedName>
        <fullName evidence="1">Large ribosomal subunit protein uL3</fullName>
    </recommendedName>
    <alternativeName>
        <fullName evidence="3">50S ribosomal protein L3</fullName>
    </alternativeName>
</protein>
<comment type="function">
    <text evidence="1">One of the primary rRNA binding proteins, it binds directly near the 3'-end of the 23S rRNA, where it nucleates assembly of the 50S subunit.</text>
</comment>
<comment type="subunit">
    <text evidence="1">Part of the 50S ribosomal subunit. Forms a cluster with proteins L14 and L19.</text>
</comment>
<comment type="similarity">
    <text evidence="1">Belongs to the universal ribosomal protein uL3 family.</text>
</comment>
<evidence type="ECO:0000255" key="1">
    <source>
        <dbReference type="HAMAP-Rule" id="MF_01325"/>
    </source>
</evidence>
<evidence type="ECO:0000256" key="2">
    <source>
        <dbReference type="SAM" id="MobiDB-lite"/>
    </source>
</evidence>
<evidence type="ECO:0000305" key="3"/>
<accession>B7IT19</accession>
<feature type="chain" id="PRO_1000141823" description="Large ribosomal subunit protein uL3">
    <location>
        <begin position="1"/>
        <end position="210"/>
    </location>
</feature>
<feature type="region of interest" description="Disordered" evidence="2">
    <location>
        <begin position="125"/>
        <end position="151"/>
    </location>
</feature>
<name>RL3_BACC2</name>
<proteinExistence type="inferred from homology"/>